<comment type="function">
    <text evidence="1">Catalyzes a salvage reaction resulting in the formation of AMP, that is energically less costly than de novo synthesis.</text>
</comment>
<comment type="catalytic activity">
    <reaction evidence="1">
        <text>AMP + diphosphate = 5-phospho-alpha-D-ribose 1-diphosphate + adenine</text>
        <dbReference type="Rhea" id="RHEA:16609"/>
        <dbReference type="ChEBI" id="CHEBI:16708"/>
        <dbReference type="ChEBI" id="CHEBI:33019"/>
        <dbReference type="ChEBI" id="CHEBI:58017"/>
        <dbReference type="ChEBI" id="CHEBI:456215"/>
        <dbReference type="EC" id="2.4.2.7"/>
    </reaction>
</comment>
<comment type="pathway">
    <text evidence="1">Purine metabolism; AMP biosynthesis via salvage pathway; AMP from adenine: step 1/1.</text>
</comment>
<comment type="subunit">
    <text evidence="1">Homodimer.</text>
</comment>
<comment type="subcellular location">
    <subcellularLocation>
        <location evidence="1">Cytoplasm</location>
    </subcellularLocation>
</comment>
<comment type="similarity">
    <text evidence="1">Belongs to the purine/pyrimidine phosphoribosyltransferase family.</text>
</comment>
<organism>
    <name type="scientific">Vibrio parahaemolyticus serotype O3:K6 (strain RIMD 2210633)</name>
    <dbReference type="NCBI Taxonomy" id="223926"/>
    <lineage>
        <taxon>Bacteria</taxon>
        <taxon>Pseudomonadati</taxon>
        <taxon>Pseudomonadota</taxon>
        <taxon>Gammaproteobacteria</taxon>
        <taxon>Vibrionales</taxon>
        <taxon>Vibrionaceae</taxon>
        <taxon>Vibrio</taxon>
    </lineage>
</organism>
<proteinExistence type="inferred from homology"/>
<reference key="1">
    <citation type="journal article" date="2003" name="Lancet">
        <title>Genome sequence of Vibrio parahaemolyticus: a pathogenic mechanism distinct from that of V. cholerae.</title>
        <authorList>
            <person name="Makino K."/>
            <person name="Oshima K."/>
            <person name="Kurokawa K."/>
            <person name="Yokoyama K."/>
            <person name="Uda T."/>
            <person name="Tagomori K."/>
            <person name="Iijima Y."/>
            <person name="Najima M."/>
            <person name="Nakano M."/>
            <person name="Yamashita A."/>
            <person name="Kubota Y."/>
            <person name="Kimura S."/>
            <person name="Yasunaga T."/>
            <person name="Honda T."/>
            <person name="Shinagawa H."/>
            <person name="Hattori M."/>
            <person name="Iida T."/>
        </authorList>
    </citation>
    <scope>NUCLEOTIDE SEQUENCE [LARGE SCALE GENOMIC DNA]</scope>
    <source>
        <strain>RIMD 2210633</strain>
    </source>
</reference>
<gene>
    <name evidence="1" type="primary">apt</name>
    <name type="ordered locus">VP2180</name>
</gene>
<protein>
    <recommendedName>
        <fullName evidence="1">Adenine phosphoribosyltransferase</fullName>
        <shortName evidence="1">APRT</shortName>
        <ecNumber evidence="1">2.4.2.7</ecNumber>
    </recommendedName>
</protein>
<accession>Q87MQ1</accession>
<sequence length="181" mass="19620">MTTETISLIKSSIKSIQDYPKPGILFRDVTSLLEDAKAYQATIGLLVERYKDMGFTKVVGTEARGFLFGAPLALELGVGFVPVRKPGKLPRPTIAQSYELEYGIDTLEIHTDAIVEGDKVLVVDDLLATGGTIEATTKLIRQLGGEVEHAAFVINLPEIGGDKRLEALGLNVFSICDFEGH</sequence>
<feature type="chain" id="PRO_0000149485" description="Adenine phosphoribosyltransferase">
    <location>
        <begin position="1"/>
        <end position="181"/>
    </location>
</feature>
<keyword id="KW-0963">Cytoplasm</keyword>
<keyword id="KW-0328">Glycosyltransferase</keyword>
<keyword id="KW-0660">Purine salvage</keyword>
<keyword id="KW-0808">Transferase</keyword>
<name>APT_VIBPA</name>
<evidence type="ECO:0000255" key="1">
    <source>
        <dbReference type="HAMAP-Rule" id="MF_00004"/>
    </source>
</evidence>
<dbReference type="EC" id="2.4.2.7" evidence="1"/>
<dbReference type="EMBL" id="BA000031">
    <property type="protein sequence ID" value="BAC60443.1"/>
    <property type="molecule type" value="Genomic_DNA"/>
</dbReference>
<dbReference type="RefSeq" id="NP_798559.1">
    <property type="nucleotide sequence ID" value="NC_004603.1"/>
</dbReference>
<dbReference type="RefSeq" id="WP_005460112.1">
    <property type="nucleotide sequence ID" value="NC_004603.1"/>
</dbReference>
<dbReference type="SMR" id="Q87MQ1"/>
<dbReference type="GeneID" id="1189693"/>
<dbReference type="KEGG" id="vpa:VP2180"/>
<dbReference type="PATRIC" id="fig|223926.6.peg.2084"/>
<dbReference type="eggNOG" id="COG0503">
    <property type="taxonomic scope" value="Bacteria"/>
</dbReference>
<dbReference type="HOGENOM" id="CLU_063339_3_0_6"/>
<dbReference type="UniPathway" id="UPA00588">
    <property type="reaction ID" value="UER00646"/>
</dbReference>
<dbReference type="Proteomes" id="UP000002493">
    <property type="component" value="Chromosome 1"/>
</dbReference>
<dbReference type="GO" id="GO:0005737">
    <property type="term" value="C:cytoplasm"/>
    <property type="evidence" value="ECO:0007669"/>
    <property type="project" value="UniProtKB-SubCell"/>
</dbReference>
<dbReference type="GO" id="GO:0002055">
    <property type="term" value="F:adenine binding"/>
    <property type="evidence" value="ECO:0007669"/>
    <property type="project" value="TreeGrafter"/>
</dbReference>
<dbReference type="GO" id="GO:0003999">
    <property type="term" value="F:adenine phosphoribosyltransferase activity"/>
    <property type="evidence" value="ECO:0007669"/>
    <property type="project" value="UniProtKB-UniRule"/>
</dbReference>
<dbReference type="GO" id="GO:0016208">
    <property type="term" value="F:AMP binding"/>
    <property type="evidence" value="ECO:0007669"/>
    <property type="project" value="TreeGrafter"/>
</dbReference>
<dbReference type="GO" id="GO:0006168">
    <property type="term" value="P:adenine salvage"/>
    <property type="evidence" value="ECO:0007669"/>
    <property type="project" value="InterPro"/>
</dbReference>
<dbReference type="GO" id="GO:0044209">
    <property type="term" value="P:AMP salvage"/>
    <property type="evidence" value="ECO:0007669"/>
    <property type="project" value="UniProtKB-UniRule"/>
</dbReference>
<dbReference type="GO" id="GO:0006166">
    <property type="term" value="P:purine ribonucleoside salvage"/>
    <property type="evidence" value="ECO:0007669"/>
    <property type="project" value="UniProtKB-KW"/>
</dbReference>
<dbReference type="CDD" id="cd06223">
    <property type="entry name" value="PRTases_typeI"/>
    <property type="match status" value="1"/>
</dbReference>
<dbReference type="FunFam" id="3.40.50.2020:FF:000004">
    <property type="entry name" value="Adenine phosphoribosyltransferase"/>
    <property type="match status" value="1"/>
</dbReference>
<dbReference type="Gene3D" id="3.40.50.2020">
    <property type="match status" value="1"/>
</dbReference>
<dbReference type="HAMAP" id="MF_00004">
    <property type="entry name" value="Aden_phosphoribosyltr"/>
    <property type="match status" value="1"/>
</dbReference>
<dbReference type="InterPro" id="IPR005764">
    <property type="entry name" value="Ade_phspho_trans"/>
</dbReference>
<dbReference type="InterPro" id="IPR000836">
    <property type="entry name" value="PRibTrfase_dom"/>
</dbReference>
<dbReference type="InterPro" id="IPR029057">
    <property type="entry name" value="PRTase-like"/>
</dbReference>
<dbReference type="InterPro" id="IPR050054">
    <property type="entry name" value="UPRTase/APRTase"/>
</dbReference>
<dbReference type="NCBIfam" id="TIGR01090">
    <property type="entry name" value="apt"/>
    <property type="match status" value="1"/>
</dbReference>
<dbReference type="NCBIfam" id="NF002632">
    <property type="entry name" value="PRK02304.1-1"/>
    <property type="match status" value="1"/>
</dbReference>
<dbReference type="NCBIfam" id="NF002634">
    <property type="entry name" value="PRK02304.1-3"/>
    <property type="match status" value="1"/>
</dbReference>
<dbReference type="NCBIfam" id="NF002636">
    <property type="entry name" value="PRK02304.1-5"/>
    <property type="match status" value="1"/>
</dbReference>
<dbReference type="PANTHER" id="PTHR32315">
    <property type="entry name" value="ADENINE PHOSPHORIBOSYLTRANSFERASE"/>
    <property type="match status" value="1"/>
</dbReference>
<dbReference type="PANTHER" id="PTHR32315:SF3">
    <property type="entry name" value="ADENINE PHOSPHORIBOSYLTRANSFERASE"/>
    <property type="match status" value="1"/>
</dbReference>
<dbReference type="Pfam" id="PF00156">
    <property type="entry name" value="Pribosyltran"/>
    <property type="match status" value="1"/>
</dbReference>
<dbReference type="SUPFAM" id="SSF53271">
    <property type="entry name" value="PRTase-like"/>
    <property type="match status" value="1"/>
</dbReference>
<dbReference type="PROSITE" id="PS00103">
    <property type="entry name" value="PUR_PYR_PR_TRANSFER"/>
    <property type="match status" value="1"/>
</dbReference>